<feature type="chain" id="PRO_0000315912" description="Germin-like protein 3">
    <location>
        <begin position="1" status="less than"/>
        <end position="16" status="greater than"/>
    </location>
</feature>
<feature type="unsure residue" description="F or M">
    <location>
        <position position="1"/>
    </location>
</feature>
<feature type="unsure residue" description="L or I">
    <location>
        <position position="4"/>
    </location>
</feature>
<feature type="unsure residue" description="Q or K">
    <location>
        <position position="7"/>
    </location>
</feature>
<feature type="unsure residue" description="L or I">
    <location>
        <position position="11"/>
    </location>
</feature>
<feature type="unsure residue" description="L or I">
    <location>
        <position position="12"/>
    </location>
</feature>
<feature type="unsure residue" description="L or I">
    <location>
        <position position="14"/>
    </location>
</feature>
<feature type="non-terminal residue">
    <location>
        <position position="1"/>
    </location>
</feature>
<feature type="non-terminal residue">
    <location>
        <position position="16"/>
    </location>
</feature>
<reference key="1">
    <citation type="journal article" date="2009" name="Physiol. Plantarum">
        <title>The presence of sinapyl lignin in Ginkgo biloba cell cultures changes our views of the evolution of lignin biosynthesis.</title>
        <authorList>
            <person name="Novo Uzal E."/>
            <person name="Gomez Ros L.V."/>
            <person name="Pomar F."/>
            <person name="Bernal M.A."/>
            <person name="Paradela A."/>
            <person name="Albar J.P."/>
            <person name="Ros Barcelo A."/>
        </authorList>
    </citation>
    <scope>PROTEIN SEQUENCE</scope>
    <source>
        <strain>PC-1121</strain>
        <tissue>Callus</tissue>
    </source>
</reference>
<evidence type="ECO:0000250" key="1"/>
<evidence type="ECO:0000250" key="2">
    <source>
        <dbReference type="UniProtKB" id="P92996"/>
    </source>
</evidence>
<evidence type="ECO:0000255" key="3"/>
<keyword id="KW-0052">Apoplast</keyword>
<keyword id="KW-0903">Direct protein sequencing</keyword>
<keyword id="KW-0464">Manganese</keyword>
<keyword id="KW-0479">Metal-binding</keyword>
<keyword id="KW-0964">Secreted</keyword>
<accession>P85353</accession>
<name>GLP3_BETPN</name>
<organism>
    <name type="scientific">Betula pendula</name>
    <name type="common">European white birch</name>
    <name type="synonym">Betula verrucosa</name>
    <dbReference type="NCBI Taxonomy" id="3505"/>
    <lineage>
        <taxon>Eukaryota</taxon>
        <taxon>Viridiplantae</taxon>
        <taxon>Streptophyta</taxon>
        <taxon>Embryophyta</taxon>
        <taxon>Tracheophyta</taxon>
        <taxon>Spermatophyta</taxon>
        <taxon>Magnoliopsida</taxon>
        <taxon>eudicotyledons</taxon>
        <taxon>Gunneridae</taxon>
        <taxon>Pentapetalae</taxon>
        <taxon>rosids</taxon>
        <taxon>fabids</taxon>
        <taxon>Fagales</taxon>
        <taxon>Betulaceae</taxon>
        <taxon>Betula</taxon>
    </lineage>
</organism>
<proteinExistence type="evidence at protein level"/>
<protein>
    <recommendedName>
        <fullName>Germin-like protein 3</fullName>
    </recommendedName>
</protein>
<comment type="function">
    <text evidence="1">May play a role in plant defense. Probably has no oxalate oxidase activity even if the active site is conserved (By similarity).</text>
</comment>
<comment type="subunit">
    <text evidence="2">Oligomer (believed to be a pentamer but probably hexamer).</text>
</comment>
<comment type="subcellular location">
    <subcellularLocation>
        <location evidence="2">Secreted</location>
        <location evidence="2">Extracellular space</location>
        <location evidence="2">Apoplast</location>
    </subcellularLocation>
</comment>
<comment type="similarity">
    <text evidence="3">Belongs to the germin family.</text>
</comment>
<sequence>FSGLGSQNPGLLVLAK</sequence>
<dbReference type="GO" id="GO:0048046">
    <property type="term" value="C:apoplast"/>
    <property type="evidence" value="ECO:0007669"/>
    <property type="project" value="UniProtKB-SubCell"/>
</dbReference>
<dbReference type="GO" id="GO:0046872">
    <property type="term" value="F:metal ion binding"/>
    <property type="evidence" value="ECO:0007669"/>
    <property type="project" value="UniProtKB-KW"/>
</dbReference>